<sequence length="718" mass="83403">MQNFTFFASCAKGIELLLKDELDALGISSSEKLAGVEFEGSFEDAYKVCIYSHLASQVMLKIATQKVTDQQALYDFISSINWLDYFDVNTAFKIIISGKHYDFNNTMFVSQKTKDAIVDQFRRETNERPNIDTDNPDNIIKLHLHKQYVNVFLCLNIESLHKRSYRQFQGQAPLKESLAAAILIKAGWLDELKKEQPILIDPMCGSGTILIEAALMAKNIAPVLLNKEFKLFNSKLHDEDLWNNLLEIAKKAQKPTNAIIQGYDIDNNVLDKADRNIYQAGVEDVVNIKRQDIRDLENELESEGLIVTNPPYGERLYGDQLDELLDIFNGFGDRLSQDFYGWKVAILTSFDESIKEMQLRTTKKNKFYNGAIETVLYQFDINEHARFKHESQLEKNIRLAEASALKSDEHIDFSNKLKKNLKNLKPWLKQSGVECYRLYDADIPTFAVAVDIYGEHVFLQEYRADATIDQNIAKQRFYQAIYQIHKTLDIQYENIHTRVRQRQKGKEQYQKNNDRNNFHVINEFNAKFYVNFDDYLDTGIFLDHRKIRQLVAKASKNKTLLNLFSYTCTASVHAALKGAKTTSVDMSNTYLEWGKNNFELNNLDIKKHNFIQADCISWLKSNSEKFDVIFLDPPTFSNSKRMDDILDIQRDHELLINLAMDSLKKDGVLYFSNNYRRFKMSQEIIAKFNCENIDKVCLSRDFLSNKNIHNCWEIKYKK</sequence>
<protein>
    <recommendedName>
        <fullName evidence="1">Ribosomal RNA large subunit methyltransferase K/L</fullName>
    </recommendedName>
    <domain>
        <recommendedName>
            <fullName evidence="1">23S rRNA m2G2445 methyltransferase</fullName>
            <ecNumber evidence="1">2.1.1.173</ecNumber>
        </recommendedName>
        <alternativeName>
            <fullName evidence="1">rRNA (guanine-N(2)-)-methyltransferase RlmL</fullName>
        </alternativeName>
    </domain>
    <domain>
        <recommendedName>
            <fullName evidence="1">23S rRNA m7G2069 methyltransferase</fullName>
            <ecNumber evidence="1">2.1.1.264</ecNumber>
        </recommendedName>
        <alternativeName>
            <fullName evidence="1">rRNA (guanine-N(7)-)-methyltransferase RlmK</fullName>
        </alternativeName>
    </domain>
</protein>
<evidence type="ECO:0000255" key="1">
    <source>
        <dbReference type="HAMAP-Rule" id="MF_01858"/>
    </source>
</evidence>
<keyword id="KW-0963">Cytoplasm</keyword>
<keyword id="KW-0489">Methyltransferase</keyword>
<keyword id="KW-0694">RNA-binding</keyword>
<keyword id="KW-0698">rRNA processing</keyword>
<keyword id="KW-0949">S-adenosyl-L-methionine</keyword>
<keyword id="KW-0808">Transferase</keyword>
<proteinExistence type="inferred from homology"/>
<reference key="1">
    <citation type="submission" date="2007-12" db="EMBL/GenBank/DDBJ databases">
        <title>Complete sequence of chromosome of Francisella philomiragia subsp. philomiragia ATCC 25017.</title>
        <authorList>
            <consortium name="US DOE Joint Genome Institute"/>
            <person name="Copeland A."/>
            <person name="Lucas S."/>
            <person name="Lapidus A."/>
            <person name="Barry K."/>
            <person name="Detter J.C."/>
            <person name="Glavina del Rio T."/>
            <person name="Hammon N."/>
            <person name="Israni S."/>
            <person name="Dalin E."/>
            <person name="Tice H."/>
            <person name="Pitluck S."/>
            <person name="Chain P."/>
            <person name="Malfatti S."/>
            <person name="Shin M."/>
            <person name="Vergez L."/>
            <person name="Schmutz J."/>
            <person name="Larimer F."/>
            <person name="Land M."/>
            <person name="Hauser L."/>
            <person name="Richardson P."/>
        </authorList>
    </citation>
    <scope>NUCLEOTIDE SEQUENCE [LARGE SCALE GENOMIC DNA]</scope>
    <source>
        <strain>ATCC 25017 / CCUG 19701 / FSC 153 / O#319-036</strain>
    </source>
</reference>
<accession>B0U0U4</accession>
<organism>
    <name type="scientific">Francisella philomiragia subsp. philomiragia (strain ATCC 25017 / CCUG 19701 / FSC 153 / O#319-036)</name>
    <dbReference type="NCBI Taxonomy" id="484022"/>
    <lineage>
        <taxon>Bacteria</taxon>
        <taxon>Pseudomonadati</taxon>
        <taxon>Pseudomonadota</taxon>
        <taxon>Gammaproteobacteria</taxon>
        <taxon>Thiotrichales</taxon>
        <taxon>Francisellaceae</taxon>
        <taxon>Francisella</taxon>
    </lineage>
</organism>
<gene>
    <name evidence="1" type="primary">rlmL</name>
    <name type="ordered locus">Fphi_1820</name>
</gene>
<name>RLMKL_FRAP2</name>
<feature type="chain" id="PRO_0000366750" description="Ribosomal RNA large subunit methyltransferase K/L">
    <location>
        <begin position="1"/>
        <end position="718"/>
    </location>
</feature>
<feature type="domain" description="THUMP" evidence="1">
    <location>
        <begin position="44"/>
        <end position="155"/>
    </location>
</feature>
<comment type="function">
    <text evidence="1">Specifically methylates the guanine in position 2445 (m2G2445) and the guanine in position 2069 (m7G2069) of 23S rRNA.</text>
</comment>
<comment type="catalytic activity">
    <reaction evidence="1">
        <text>guanosine(2445) in 23S rRNA + S-adenosyl-L-methionine = N(2)-methylguanosine(2445) in 23S rRNA + S-adenosyl-L-homocysteine + H(+)</text>
        <dbReference type="Rhea" id="RHEA:42740"/>
        <dbReference type="Rhea" id="RHEA-COMP:10215"/>
        <dbReference type="Rhea" id="RHEA-COMP:10216"/>
        <dbReference type="ChEBI" id="CHEBI:15378"/>
        <dbReference type="ChEBI" id="CHEBI:57856"/>
        <dbReference type="ChEBI" id="CHEBI:59789"/>
        <dbReference type="ChEBI" id="CHEBI:74269"/>
        <dbReference type="ChEBI" id="CHEBI:74481"/>
        <dbReference type="EC" id="2.1.1.173"/>
    </reaction>
</comment>
<comment type="catalytic activity">
    <reaction evidence="1">
        <text>guanosine(2069) in 23S rRNA + S-adenosyl-L-methionine = N(2)-methylguanosine(2069) in 23S rRNA + S-adenosyl-L-homocysteine + H(+)</text>
        <dbReference type="Rhea" id="RHEA:43772"/>
        <dbReference type="Rhea" id="RHEA-COMP:10688"/>
        <dbReference type="Rhea" id="RHEA-COMP:10689"/>
        <dbReference type="ChEBI" id="CHEBI:15378"/>
        <dbReference type="ChEBI" id="CHEBI:57856"/>
        <dbReference type="ChEBI" id="CHEBI:59789"/>
        <dbReference type="ChEBI" id="CHEBI:74269"/>
        <dbReference type="ChEBI" id="CHEBI:74481"/>
        <dbReference type="EC" id="2.1.1.264"/>
    </reaction>
</comment>
<comment type="subcellular location">
    <subcellularLocation>
        <location evidence="1">Cytoplasm</location>
    </subcellularLocation>
</comment>
<comment type="similarity">
    <text evidence="1">Belongs to the methyltransferase superfamily. RlmKL family.</text>
</comment>
<dbReference type="EC" id="2.1.1.173" evidence="1"/>
<dbReference type="EC" id="2.1.1.264" evidence="1"/>
<dbReference type="EMBL" id="CP000937">
    <property type="protein sequence ID" value="ABZ88047.1"/>
    <property type="molecule type" value="Genomic_DNA"/>
</dbReference>
<dbReference type="SMR" id="B0U0U4"/>
<dbReference type="KEGG" id="fph:Fphi_1820"/>
<dbReference type="eggNOG" id="COG0116">
    <property type="taxonomic scope" value="Bacteria"/>
</dbReference>
<dbReference type="eggNOG" id="COG1092">
    <property type="taxonomic scope" value="Bacteria"/>
</dbReference>
<dbReference type="HOGENOM" id="CLU_014042_2_0_6"/>
<dbReference type="GO" id="GO:0005737">
    <property type="term" value="C:cytoplasm"/>
    <property type="evidence" value="ECO:0007669"/>
    <property type="project" value="UniProtKB-SubCell"/>
</dbReference>
<dbReference type="GO" id="GO:0052915">
    <property type="term" value="F:23S rRNA (guanine(2445)-N(2))-methyltransferase activity"/>
    <property type="evidence" value="ECO:0007669"/>
    <property type="project" value="UniProtKB-UniRule"/>
</dbReference>
<dbReference type="GO" id="GO:0003723">
    <property type="term" value="F:RNA binding"/>
    <property type="evidence" value="ECO:0007669"/>
    <property type="project" value="UniProtKB-KW"/>
</dbReference>
<dbReference type="GO" id="GO:0070043">
    <property type="term" value="F:rRNA (guanine-N7-)-methyltransferase activity"/>
    <property type="evidence" value="ECO:0007669"/>
    <property type="project" value="UniProtKB-UniRule"/>
</dbReference>
<dbReference type="CDD" id="cd02440">
    <property type="entry name" value="AdoMet_MTases"/>
    <property type="match status" value="1"/>
</dbReference>
<dbReference type="CDD" id="cd11715">
    <property type="entry name" value="THUMP_AdoMetMT"/>
    <property type="match status" value="1"/>
</dbReference>
<dbReference type="Gene3D" id="3.30.2130.30">
    <property type="match status" value="1"/>
</dbReference>
<dbReference type="Gene3D" id="3.30.750.80">
    <property type="entry name" value="RNA methyltransferase domain (HRMD) like"/>
    <property type="match status" value="1"/>
</dbReference>
<dbReference type="Gene3D" id="3.40.50.150">
    <property type="entry name" value="Vaccinia Virus protein VP39"/>
    <property type="match status" value="2"/>
</dbReference>
<dbReference type="HAMAP" id="MF_01858">
    <property type="entry name" value="23SrRNA_methyltr_KL"/>
    <property type="match status" value="1"/>
</dbReference>
<dbReference type="InterPro" id="IPR017244">
    <property type="entry name" value="23SrRNA_methyltr_KL"/>
</dbReference>
<dbReference type="InterPro" id="IPR002052">
    <property type="entry name" value="DNA_methylase_N6_adenine_CS"/>
</dbReference>
<dbReference type="InterPro" id="IPR000241">
    <property type="entry name" value="RlmKL-like_Mtase"/>
</dbReference>
<dbReference type="InterPro" id="IPR053943">
    <property type="entry name" value="RlmKL-like_Mtase_CS"/>
</dbReference>
<dbReference type="InterPro" id="IPR054170">
    <property type="entry name" value="RlmL_1st"/>
</dbReference>
<dbReference type="InterPro" id="IPR019614">
    <property type="entry name" value="SAM-dep_methyl-trfase"/>
</dbReference>
<dbReference type="InterPro" id="IPR029063">
    <property type="entry name" value="SAM-dependent_MTases_sf"/>
</dbReference>
<dbReference type="InterPro" id="IPR004114">
    <property type="entry name" value="THUMP_dom"/>
</dbReference>
<dbReference type="NCBIfam" id="NF008748">
    <property type="entry name" value="PRK11783.1"/>
    <property type="match status" value="1"/>
</dbReference>
<dbReference type="PANTHER" id="PTHR47313">
    <property type="entry name" value="RIBOSOMAL RNA LARGE SUBUNIT METHYLTRANSFERASE K/L"/>
    <property type="match status" value="1"/>
</dbReference>
<dbReference type="PANTHER" id="PTHR47313:SF1">
    <property type="entry name" value="RIBOSOMAL RNA LARGE SUBUNIT METHYLTRANSFERASE K_L"/>
    <property type="match status" value="1"/>
</dbReference>
<dbReference type="Pfam" id="PF10672">
    <property type="entry name" value="Methyltrans_SAM"/>
    <property type="match status" value="1"/>
</dbReference>
<dbReference type="Pfam" id="PF22020">
    <property type="entry name" value="RlmL_1st"/>
    <property type="match status" value="1"/>
</dbReference>
<dbReference type="Pfam" id="PF02926">
    <property type="entry name" value="THUMP"/>
    <property type="match status" value="1"/>
</dbReference>
<dbReference type="Pfam" id="PF01170">
    <property type="entry name" value="UPF0020"/>
    <property type="match status" value="1"/>
</dbReference>
<dbReference type="PIRSF" id="PIRSF037618">
    <property type="entry name" value="RNA_Mtase_bacteria_prd"/>
    <property type="match status" value="1"/>
</dbReference>
<dbReference type="SMART" id="SM00981">
    <property type="entry name" value="THUMP"/>
    <property type="match status" value="1"/>
</dbReference>
<dbReference type="SUPFAM" id="SSF53335">
    <property type="entry name" value="S-adenosyl-L-methionine-dependent methyltransferases"/>
    <property type="match status" value="2"/>
</dbReference>
<dbReference type="PROSITE" id="PS51165">
    <property type="entry name" value="THUMP"/>
    <property type="match status" value="1"/>
</dbReference>
<dbReference type="PROSITE" id="PS01261">
    <property type="entry name" value="UPF0020"/>
    <property type="match status" value="1"/>
</dbReference>